<proteinExistence type="inferred from homology"/>
<protein>
    <recommendedName>
        <fullName evidence="1">UPF0122 protein Sez_1013</fullName>
    </recommendedName>
</protein>
<reference key="1">
    <citation type="journal article" date="2008" name="PLoS ONE">
        <title>Genome sequence of a lancefield group C Streptococcus zooepidemicus strain causing epidemic nephritis: new information about an old disease.</title>
        <authorList>
            <person name="Beres S.B."/>
            <person name="Sesso R."/>
            <person name="Pinto S.W.L."/>
            <person name="Hoe N.P."/>
            <person name="Porcella S.F."/>
            <person name="Deleo F.R."/>
            <person name="Musser J.M."/>
        </authorList>
    </citation>
    <scope>NUCLEOTIDE SEQUENCE [LARGE SCALE GENOMIC DNA]</scope>
    <source>
        <strain>MGCS10565</strain>
    </source>
</reference>
<comment type="function">
    <text evidence="1">Might take part in the signal recognition particle (SRP) pathway. This is inferred from the conservation of its genetic proximity to ftsY/ffh. May be a regulatory protein.</text>
</comment>
<comment type="similarity">
    <text evidence="1">Belongs to the UPF0122 family.</text>
</comment>
<accession>B4U300</accession>
<sequence length="113" mass="13533">MKIMEIEKTNRMNALFEFYAALLTDKQMNYIELYYADDYSLAEIAEEFGVSRQAVYDNIKRTEKILEAYEMKLHMYSDYIVRSEIFDDILAKYPSDHYLRDKISILTSIDNRD</sequence>
<name>Y1013_STREM</name>
<feature type="chain" id="PRO_1000100816" description="UPF0122 protein Sez_1013">
    <location>
        <begin position="1"/>
        <end position="113"/>
    </location>
</feature>
<gene>
    <name type="ordered locus">Sez_1013</name>
</gene>
<organism>
    <name type="scientific">Streptococcus equi subsp. zooepidemicus (strain MGCS10565)</name>
    <dbReference type="NCBI Taxonomy" id="552526"/>
    <lineage>
        <taxon>Bacteria</taxon>
        <taxon>Bacillati</taxon>
        <taxon>Bacillota</taxon>
        <taxon>Bacilli</taxon>
        <taxon>Lactobacillales</taxon>
        <taxon>Streptococcaceae</taxon>
        <taxon>Streptococcus</taxon>
    </lineage>
</organism>
<evidence type="ECO:0000255" key="1">
    <source>
        <dbReference type="HAMAP-Rule" id="MF_00245"/>
    </source>
</evidence>
<dbReference type="EMBL" id="CP001129">
    <property type="protein sequence ID" value="ACG62367.1"/>
    <property type="molecule type" value="Genomic_DNA"/>
</dbReference>
<dbReference type="SMR" id="B4U300"/>
<dbReference type="KEGG" id="sez:Sez_1013"/>
<dbReference type="HOGENOM" id="CLU_129218_1_1_9"/>
<dbReference type="Proteomes" id="UP000001873">
    <property type="component" value="Chromosome"/>
</dbReference>
<dbReference type="Gene3D" id="1.10.10.10">
    <property type="entry name" value="Winged helix-like DNA-binding domain superfamily/Winged helix DNA-binding domain"/>
    <property type="match status" value="1"/>
</dbReference>
<dbReference type="HAMAP" id="MF_00245">
    <property type="entry name" value="UPF0122"/>
    <property type="match status" value="1"/>
</dbReference>
<dbReference type="InterPro" id="IPR013324">
    <property type="entry name" value="RNA_pol_sigma_r3/r4-like"/>
</dbReference>
<dbReference type="InterPro" id="IPR007394">
    <property type="entry name" value="UPF0122"/>
</dbReference>
<dbReference type="InterPro" id="IPR054831">
    <property type="entry name" value="UPF0122_fam_protein"/>
</dbReference>
<dbReference type="InterPro" id="IPR036388">
    <property type="entry name" value="WH-like_DNA-bd_sf"/>
</dbReference>
<dbReference type="NCBIfam" id="NF001066">
    <property type="entry name" value="PRK00118.1-1"/>
    <property type="match status" value="1"/>
</dbReference>
<dbReference type="NCBIfam" id="NF001068">
    <property type="entry name" value="PRK00118.1-4"/>
    <property type="match status" value="1"/>
</dbReference>
<dbReference type="NCBIfam" id="NF001070">
    <property type="entry name" value="PRK00118.1-6"/>
    <property type="match status" value="1"/>
</dbReference>
<dbReference type="NCBIfam" id="NF045758">
    <property type="entry name" value="YlxM"/>
    <property type="match status" value="1"/>
</dbReference>
<dbReference type="PANTHER" id="PTHR40083">
    <property type="entry name" value="UPF0122 PROTEIN CBO2450/CLC_2298"/>
    <property type="match status" value="1"/>
</dbReference>
<dbReference type="PANTHER" id="PTHR40083:SF1">
    <property type="entry name" value="UPF0122 PROTEIN YLXM"/>
    <property type="match status" value="1"/>
</dbReference>
<dbReference type="Pfam" id="PF04297">
    <property type="entry name" value="UPF0122"/>
    <property type="match status" value="1"/>
</dbReference>
<dbReference type="SUPFAM" id="SSF88659">
    <property type="entry name" value="Sigma3 and sigma4 domains of RNA polymerase sigma factors"/>
    <property type="match status" value="1"/>
</dbReference>